<reference key="1">
    <citation type="journal article" date="2006" name="J. Bacteriol.">
        <title>Comparative genomic evidence for a close relationship between the dimorphic prosthecate bacteria Hyphomonas neptunium and Caulobacter crescentus.</title>
        <authorList>
            <person name="Badger J.H."/>
            <person name="Hoover T.R."/>
            <person name="Brun Y.V."/>
            <person name="Weiner R.M."/>
            <person name="Laub M.T."/>
            <person name="Alexandre G."/>
            <person name="Mrazek J."/>
            <person name="Ren Q."/>
            <person name="Paulsen I.T."/>
            <person name="Nelson K.E."/>
            <person name="Khouri H.M."/>
            <person name="Radune D."/>
            <person name="Sosa J."/>
            <person name="Dodson R.J."/>
            <person name="Sullivan S.A."/>
            <person name="Rosovitz M.J."/>
            <person name="Madupu R."/>
            <person name="Brinkac L.M."/>
            <person name="Durkin A.S."/>
            <person name="Daugherty S.C."/>
            <person name="Kothari S.P."/>
            <person name="Giglio M.G."/>
            <person name="Zhou L."/>
            <person name="Haft D.H."/>
            <person name="Selengut J.D."/>
            <person name="Davidsen T.M."/>
            <person name="Yang Q."/>
            <person name="Zafar N."/>
            <person name="Ward N.L."/>
        </authorList>
    </citation>
    <scope>NUCLEOTIDE SEQUENCE [LARGE SCALE GENOMIC DNA]</scope>
    <source>
        <strain>ATCC 15444</strain>
    </source>
</reference>
<evidence type="ECO:0000255" key="1">
    <source>
        <dbReference type="HAMAP-Rule" id="MF_00006"/>
    </source>
</evidence>
<accession>Q0BWK6</accession>
<sequence>MADDKGQMMWGGRFAATPSAIMEEINASLDIDRRMAEEDVAGSRAHADMLAEMGILSVADNEAIQGGLDAVIEEMRAGTFPFRRELEDIHMNVEARLKELIGEPAGRLHTARSRNDQVITDFRLWTRRALDETGQLVAGLQAMLVRRADENTSTVMPGFTHLQTAQPVTLGHHLLAYVEMLERDRSRLLDCAVRLNECPLGAAALAGTGFPIDRDMTAEALGFARPMANSLDAVSARDFALEALSSLSIAATHLSRLAEEIVLWTSPQFGFARLSDQWSTGSSIMPQKRNPDAAELIRAKASLITGHFSALQGAIKALPLAYAKDLQDDKRLTFDAFDTFNLCVRAMTGMIETISFKPDAMRAAAAKGFSTATDLADWLVRELGMPFRDAHHVTGRIVARAEAKGVDLADLPLKEMQAVHSAITQEVYGVLSVEASAASRTSYGATSPVRVAEQVAQWKQRLRVE</sequence>
<protein>
    <recommendedName>
        <fullName evidence="1">Argininosuccinate lyase</fullName>
        <shortName evidence="1">ASAL</shortName>
        <ecNumber evidence="1">4.3.2.1</ecNumber>
    </recommendedName>
    <alternativeName>
        <fullName evidence="1">Arginosuccinase</fullName>
    </alternativeName>
</protein>
<organism>
    <name type="scientific">Hyphomonas neptunium (strain ATCC 15444)</name>
    <dbReference type="NCBI Taxonomy" id="228405"/>
    <lineage>
        <taxon>Bacteria</taxon>
        <taxon>Pseudomonadati</taxon>
        <taxon>Pseudomonadota</taxon>
        <taxon>Alphaproteobacteria</taxon>
        <taxon>Hyphomonadales</taxon>
        <taxon>Hyphomonadaceae</taxon>
        <taxon>Hyphomonas</taxon>
    </lineage>
</organism>
<name>ARLY_HYPNA</name>
<proteinExistence type="inferred from homology"/>
<dbReference type="EC" id="4.3.2.1" evidence="1"/>
<dbReference type="EMBL" id="CP000158">
    <property type="protein sequence ID" value="ABI76320.1"/>
    <property type="molecule type" value="Genomic_DNA"/>
</dbReference>
<dbReference type="RefSeq" id="WP_011648431.1">
    <property type="nucleotide sequence ID" value="NC_008358.1"/>
</dbReference>
<dbReference type="SMR" id="Q0BWK6"/>
<dbReference type="STRING" id="228405.HNE_3465"/>
<dbReference type="KEGG" id="hne:HNE_3465"/>
<dbReference type="eggNOG" id="COG0165">
    <property type="taxonomic scope" value="Bacteria"/>
</dbReference>
<dbReference type="HOGENOM" id="CLU_027272_2_3_5"/>
<dbReference type="UniPathway" id="UPA00068">
    <property type="reaction ID" value="UER00114"/>
</dbReference>
<dbReference type="Proteomes" id="UP000001959">
    <property type="component" value="Chromosome"/>
</dbReference>
<dbReference type="GO" id="GO:0005829">
    <property type="term" value="C:cytosol"/>
    <property type="evidence" value="ECO:0007669"/>
    <property type="project" value="TreeGrafter"/>
</dbReference>
<dbReference type="GO" id="GO:0004056">
    <property type="term" value="F:argininosuccinate lyase activity"/>
    <property type="evidence" value="ECO:0007669"/>
    <property type="project" value="UniProtKB-UniRule"/>
</dbReference>
<dbReference type="GO" id="GO:0042450">
    <property type="term" value="P:arginine biosynthetic process via ornithine"/>
    <property type="evidence" value="ECO:0007669"/>
    <property type="project" value="InterPro"/>
</dbReference>
<dbReference type="GO" id="GO:0006526">
    <property type="term" value="P:L-arginine biosynthetic process"/>
    <property type="evidence" value="ECO:0007669"/>
    <property type="project" value="UniProtKB-UniRule"/>
</dbReference>
<dbReference type="CDD" id="cd01359">
    <property type="entry name" value="Argininosuccinate_lyase"/>
    <property type="match status" value="1"/>
</dbReference>
<dbReference type="FunFam" id="1.10.275.10:FF:000002">
    <property type="entry name" value="Argininosuccinate lyase"/>
    <property type="match status" value="1"/>
</dbReference>
<dbReference type="FunFam" id="1.10.40.30:FF:000001">
    <property type="entry name" value="Argininosuccinate lyase"/>
    <property type="match status" value="1"/>
</dbReference>
<dbReference type="FunFam" id="1.20.200.10:FF:000015">
    <property type="entry name" value="argininosuccinate lyase isoform X2"/>
    <property type="match status" value="1"/>
</dbReference>
<dbReference type="Gene3D" id="1.10.40.30">
    <property type="entry name" value="Fumarase/aspartase (C-terminal domain)"/>
    <property type="match status" value="1"/>
</dbReference>
<dbReference type="Gene3D" id="1.20.200.10">
    <property type="entry name" value="Fumarase/aspartase (Central domain)"/>
    <property type="match status" value="1"/>
</dbReference>
<dbReference type="Gene3D" id="1.10.275.10">
    <property type="entry name" value="Fumarase/aspartase (N-terminal domain)"/>
    <property type="match status" value="1"/>
</dbReference>
<dbReference type="HAMAP" id="MF_00006">
    <property type="entry name" value="Arg_succ_lyase"/>
    <property type="match status" value="1"/>
</dbReference>
<dbReference type="InterPro" id="IPR029419">
    <property type="entry name" value="Arg_succ_lyase_C"/>
</dbReference>
<dbReference type="InterPro" id="IPR009049">
    <property type="entry name" value="Argininosuccinate_lyase"/>
</dbReference>
<dbReference type="InterPro" id="IPR024083">
    <property type="entry name" value="Fumarase/histidase_N"/>
</dbReference>
<dbReference type="InterPro" id="IPR020557">
    <property type="entry name" value="Fumarate_lyase_CS"/>
</dbReference>
<dbReference type="InterPro" id="IPR000362">
    <property type="entry name" value="Fumarate_lyase_fam"/>
</dbReference>
<dbReference type="InterPro" id="IPR022761">
    <property type="entry name" value="Fumarate_lyase_N"/>
</dbReference>
<dbReference type="InterPro" id="IPR008948">
    <property type="entry name" value="L-Aspartase-like"/>
</dbReference>
<dbReference type="NCBIfam" id="TIGR00838">
    <property type="entry name" value="argH"/>
    <property type="match status" value="1"/>
</dbReference>
<dbReference type="PANTHER" id="PTHR43814">
    <property type="entry name" value="ARGININOSUCCINATE LYASE"/>
    <property type="match status" value="1"/>
</dbReference>
<dbReference type="PANTHER" id="PTHR43814:SF1">
    <property type="entry name" value="ARGININOSUCCINATE LYASE"/>
    <property type="match status" value="1"/>
</dbReference>
<dbReference type="Pfam" id="PF14698">
    <property type="entry name" value="ASL_C2"/>
    <property type="match status" value="1"/>
</dbReference>
<dbReference type="Pfam" id="PF00206">
    <property type="entry name" value="Lyase_1"/>
    <property type="match status" value="1"/>
</dbReference>
<dbReference type="PRINTS" id="PR00145">
    <property type="entry name" value="ARGSUCLYASE"/>
</dbReference>
<dbReference type="PRINTS" id="PR00149">
    <property type="entry name" value="FUMRATELYASE"/>
</dbReference>
<dbReference type="SUPFAM" id="SSF48557">
    <property type="entry name" value="L-aspartase-like"/>
    <property type="match status" value="1"/>
</dbReference>
<dbReference type="PROSITE" id="PS00163">
    <property type="entry name" value="FUMARATE_LYASES"/>
    <property type="match status" value="1"/>
</dbReference>
<comment type="catalytic activity">
    <reaction evidence="1">
        <text>2-(N(omega)-L-arginino)succinate = fumarate + L-arginine</text>
        <dbReference type="Rhea" id="RHEA:24020"/>
        <dbReference type="ChEBI" id="CHEBI:29806"/>
        <dbReference type="ChEBI" id="CHEBI:32682"/>
        <dbReference type="ChEBI" id="CHEBI:57472"/>
        <dbReference type="EC" id="4.3.2.1"/>
    </reaction>
</comment>
<comment type="pathway">
    <text evidence="1">Amino-acid biosynthesis; L-arginine biosynthesis; L-arginine from L-ornithine and carbamoyl phosphate: step 3/3.</text>
</comment>
<comment type="subcellular location">
    <subcellularLocation>
        <location evidence="1">Cytoplasm</location>
    </subcellularLocation>
</comment>
<comment type="similarity">
    <text evidence="1">Belongs to the lyase 1 family. Argininosuccinate lyase subfamily.</text>
</comment>
<feature type="chain" id="PRO_1000000486" description="Argininosuccinate lyase">
    <location>
        <begin position="1"/>
        <end position="465"/>
    </location>
</feature>
<gene>
    <name evidence="1" type="primary">argH</name>
    <name type="ordered locus">HNE_3465</name>
</gene>
<keyword id="KW-0028">Amino-acid biosynthesis</keyword>
<keyword id="KW-0055">Arginine biosynthesis</keyword>
<keyword id="KW-0963">Cytoplasm</keyword>
<keyword id="KW-0456">Lyase</keyword>
<keyword id="KW-1185">Reference proteome</keyword>